<dbReference type="EMBL" id="AB987829">
    <property type="protein sequence ID" value="BAP91162.1"/>
    <property type="molecule type" value="mRNA"/>
</dbReference>
<dbReference type="EMBL" id="AC025772">
    <property type="status" value="NOT_ANNOTATED_CDS"/>
    <property type="molecule type" value="Genomic_DNA"/>
</dbReference>
<dbReference type="EMBL" id="AC026398">
    <property type="status" value="NOT_ANNOTATED_CDS"/>
    <property type="molecule type" value="Genomic_DNA"/>
</dbReference>
<dbReference type="EMBL" id="AC034228">
    <property type="status" value="NOT_ANNOTATED_CDS"/>
    <property type="molecule type" value="Genomic_DNA"/>
</dbReference>
<dbReference type="EMBL" id="KC877112">
    <property type="status" value="NOT_ANNOTATED_CDS"/>
    <property type="molecule type" value="Genomic_DNA"/>
</dbReference>
<dbReference type="CCDS" id="CCDS75292.2"/>
<dbReference type="RefSeq" id="NP_001290551.1">
    <property type="nucleotide sequence ID" value="NM_001303622.2"/>
</dbReference>
<dbReference type="SMR" id="A0A087WXM9"/>
<dbReference type="FunCoup" id="A0A087WXM9">
    <property type="interactions" value="22"/>
</dbReference>
<dbReference type="IntAct" id="A0A087WXM9">
    <property type="interactions" value="9"/>
</dbReference>
<dbReference type="STRING" id="9606.ENSP00000488568"/>
<dbReference type="GlyGen" id="A0A087WXM9">
    <property type="glycosylation" value="5 sites, 1 O-linked glycan (3 sites)"/>
</dbReference>
<dbReference type="iPTMnet" id="A0A087WXM9"/>
<dbReference type="PhosphoSitePlus" id="A0A087WXM9"/>
<dbReference type="BioMuta" id="MEIKIN"/>
<dbReference type="jPOST" id="A0A087WXM9"/>
<dbReference type="MassIVE" id="A0A087WXM9"/>
<dbReference type="PeptideAtlas" id="A0A087WXM9"/>
<dbReference type="Antibodypedia" id="77546">
    <property type="antibodies" value="21 antibodies from 4 providers"/>
</dbReference>
<dbReference type="DNASU" id="728637"/>
<dbReference type="Ensembl" id="ENST00000442687.6">
    <property type="protein sequence ID" value="ENSP00000488568.1"/>
    <property type="gene ID" value="ENSG00000239642.6"/>
</dbReference>
<dbReference type="GeneID" id="728637"/>
<dbReference type="KEGG" id="hsa:728637"/>
<dbReference type="MANE-Select" id="ENST00000442687.6">
    <property type="protein sequence ID" value="ENSP00000488568.1"/>
    <property type="RefSeq nucleotide sequence ID" value="NM_001303622.2"/>
    <property type="RefSeq protein sequence ID" value="NP_001290551.1"/>
</dbReference>
<dbReference type="UCSC" id="uc031skz.2">
    <property type="organism name" value="human"/>
</dbReference>
<dbReference type="AGR" id="HGNC:51253"/>
<dbReference type="CTD" id="728637"/>
<dbReference type="DisGeNET" id="728637"/>
<dbReference type="GeneCards" id="MEIKIN"/>
<dbReference type="HGNC" id="HGNC:51253">
    <property type="gene designation" value="MEIKIN"/>
</dbReference>
<dbReference type="HPA" id="ENSG00000239642">
    <property type="expression patterns" value="Tissue enriched (testis)"/>
</dbReference>
<dbReference type="MIM" id="616223">
    <property type="type" value="gene"/>
</dbReference>
<dbReference type="neXtProt" id="NX_A0A087WXM9"/>
<dbReference type="OpenTargets" id="ENSG00000239642"/>
<dbReference type="VEuPathDB" id="HostDB:ENSG00000239642"/>
<dbReference type="GeneTree" id="ENSGT00390000016270"/>
<dbReference type="HOGENOM" id="CLU_701239_0_0_1"/>
<dbReference type="InParanoid" id="A0A087WXM9"/>
<dbReference type="OMA" id="NEFPANT"/>
<dbReference type="OrthoDB" id="8443315at2759"/>
<dbReference type="PAN-GO" id="A0A087WXM9">
    <property type="GO annotations" value="5 GO annotations based on evolutionary models"/>
</dbReference>
<dbReference type="PathwayCommons" id="A0A087WXM9"/>
<dbReference type="SignaLink" id="A0A087WXM9"/>
<dbReference type="BioGRID-ORCS" id="728637">
    <property type="hits" value="2 hits in 146 CRISPR screens"/>
</dbReference>
<dbReference type="ChiTaRS" id="MEIKIN">
    <property type="organism name" value="human"/>
</dbReference>
<dbReference type="GenomeRNAi" id="728637"/>
<dbReference type="Pharos" id="A0A087WXM9">
    <property type="development level" value="Tdark"/>
</dbReference>
<dbReference type="PRO" id="PR:A0A087WXM9"/>
<dbReference type="Proteomes" id="UP000005640">
    <property type="component" value="Chromosome 5"/>
</dbReference>
<dbReference type="RNAct" id="A0A087WXM9">
    <property type="molecule type" value="protein"/>
</dbReference>
<dbReference type="Bgee" id="ENSG00000239642">
    <property type="expression patterns" value="Expressed in male germ line stem cell (sensu Vertebrata) in testis and 87 other cell types or tissues"/>
</dbReference>
<dbReference type="ExpressionAtlas" id="A0A087WXM9">
    <property type="expression patterns" value="baseline and differential"/>
</dbReference>
<dbReference type="GO" id="GO:0000779">
    <property type="term" value="C:condensed chromosome, centromeric region"/>
    <property type="evidence" value="ECO:0000250"/>
    <property type="project" value="UniProtKB"/>
</dbReference>
<dbReference type="GO" id="GO:0000776">
    <property type="term" value="C:kinetochore"/>
    <property type="evidence" value="ECO:0000250"/>
    <property type="project" value="UniProtKB"/>
</dbReference>
<dbReference type="GO" id="GO:0016321">
    <property type="term" value="P:female meiosis chromosome segregation"/>
    <property type="evidence" value="ECO:0000250"/>
    <property type="project" value="UniProtKB"/>
</dbReference>
<dbReference type="GO" id="GO:0045143">
    <property type="term" value="P:homologous chromosome segregation"/>
    <property type="evidence" value="ECO:0000250"/>
    <property type="project" value="UniProtKB"/>
</dbReference>
<dbReference type="GO" id="GO:0007060">
    <property type="term" value="P:male meiosis chromosome segregation"/>
    <property type="evidence" value="ECO:0000250"/>
    <property type="project" value="UniProtKB"/>
</dbReference>
<dbReference type="GO" id="GO:0010789">
    <property type="term" value="P:meiotic sister chromatid cohesion involved in meiosis I"/>
    <property type="evidence" value="ECO:0000250"/>
    <property type="project" value="UniProtKB"/>
</dbReference>
<dbReference type="GO" id="GO:0051754">
    <property type="term" value="P:meiotic sister chromatid cohesion, centromeric"/>
    <property type="evidence" value="ECO:0000250"/>
    <property type="project" value="UniProtKB"/>
</dbReference>
<dbReference type="InterPro" id="IPR034545">
    <property type="entry name" value="Meikin"/>
</dbReference>
<dbReference type="PANTHER" id="PTHR38006">
    <property type="entry name" value="MEIOSIS-SPECIFIC KINETOCHORE PROTEIN"/>
    <property type="match status" value="1"/>
</dbReference>
<dbReference type="PANTHER" id="PTHR38006:SF1">
    <property type="entry name" value="MEIOSIS-SPECIFIC KINETOCHORE PROTEIN"/>
    <property type="match status" value="1"/>
</dbReference>
<reference key="1">
    <citation type="journal article" date="2015" name="Nature">
        <title>Meikin is a conserved regulator of meiosis-I-specific kinetochore function.</title>
        <authorList>
            <person name="Kim J."/>
            <person name="Ishiguro K."/>
            <person name="Nambu A."/>
            <person name="Akiyoshi B."/>
            <person name="Yokobayashi S."/>
            <person name="Kagami A."/>
            <person name="Ishiguro T."/>
            <person name="Pendas A.M."/>
            <person name="Takeda N."/>
            <person name="Sakakibara Y."/>
            <person name="Kitajima T.S."/>
            <person name="Tanno Y."/>
            <person name="Sakuno T."/>
            <person name="Watanabe Y."/>
        </authorList>
    </citation>
    <scope>NUCLEOTIDE SEQUENCE [MRNA]</scope>
</reference>
<reference key="2">
    <citation type="journal article" date="2004" name="Nature">
        <title>The DNA sequence and comparative analysis of human chromosome 5.</title>
        <authorList>
            <person name="Schmutz J."/>
            <person name="Martin J."/>
            <person name="Terry A."/>
            <person name="Couronne O."/>
            <person name="Grimwood J."/>
            <person name="Lowry S."/>
            <person name="Gordon L.A."/>
            <person name="Scott D."/>
            <person name="Xie G."/>
            <person name="Huang W."/>
            <person name="Hellsten U."/>
            <person name="Tran-Gyamfi M."/>
            <person name="She X."/>
            <person name="Prabhakar S."/>
            <person name="Aerts A."/>
            <person name="Altherr M."/>
            <person name="Bajorek E."/>
            <person name="Black S."/>
            <person name="Branscomb E."/>
            <person name="Caoile C."/>
            <person name="Challacombe J.F."/>
            <person name="Chan Y.M."/>
            <person name="Denys M."/>
            <person name="Detter J.C."/>
            <person name="Escobar J."/>
            <person name="Flowers D."/>
            <person name="Fotopulos D."/>
            <person name="Glavina T."/>
            <person name="Gomez M."/>
            <person name="Gonzales E."/>
            <person name="Goodstein D."/>
            <person name="Grigoriev I."/>
            <person name="Groza M."/>
            <person name="Hammon N."/>
            <person name="Hawkins T."/>
            <person name="Haydu L."/>
            <person name="Israni S."/>
            <person name="Jett J."/>
            <person name="Kadner K."/>
            <person name="Kimball H."/>
            <person name="Kobayashi A."/>
            <person name="Lopez F."/>
            <person name="Lou Y."/>
            <person name="Martinez D."/>
            <person name="Medina C."/>
            <person name="Morgan J."/>
            <person name="Nandkeshwar R."/>
            <person name="Noonan J.P."/>
            <person name="Pitluck S."/>
            <person name="Pollard M."/>
            <person name="Predki P."/>
            <person name="Priest J."/>
            <person name="Ramirez L."/>
            <person name="Retterer J."/>
            <person name="Rodriguez A."/>
            <person name="Rogers S."/>
            <person name="Salamov A."/>
            <person name="Salazar A."/>
            <person name="Thayer N."/>
            <person name="Tice H."/>
            <person name="Tsai M."/>
            <person name="Ustaszewska A."/>
            <person name="Vo N."/>
            <person name="Wheeler J."/>
            <person name="Wu K."/>
            <person name="Yang J."/>
            <person name="Dickson M."/>
            <person name="Cheng J.-F."/>
            <person name="Eichler E.E."/>
            <person name="Olsen A."/>
            <person name="Pennacchio L.A."/>
            <person name="Rokhsar D.S."/>
            <person name="Richardson P."/>
            <person name="Lucas S.M."/>
            <person name="Myers R.M."/>
            <person name="Rubin E.M."/>
        </authorList>
    </citation>
    <scope>NUCLEOTIDE SEQUENCE [LARGE SCALE GENOMIC DNA]</scope>
</reference>
<keyword id="KW-0137">Centromere</keyword>
<keyword id="KW-0158">Chromosome</keyword>
<keyword id="KW-0159">Chromosome partition</keyword>
<keyword id="KW-0995">Kinetochore</keyword>
<keyword id="KW-0469">Meiosis</keyword>
<keyword id="KW-1267">Proteomics identification</keyword>
<keyword id="KW-1185">Reference proteome</keyword>
<organism>
    <name type="scientific">Homo sapiens</name>
    <name type="common">Human</name>
    <dbReference type="NCBI Taxonomy" id="9606"/>
    <lineage>
        <taxon>Eukaryota</taxon>
        <taxon>Metazoa</taxon>
        <taxon>Chordata</taxon>
        <taxon>Craniata</taxon>
        <taxon>Vertebrata</taxon>
        <taxon>Euteleostomi</taxon>
        <taxon>Mammalia</taxon>
        <taxon>Eutheria</taxon>
        <taxon>Euarchontoglires</taxon>
        <taxon>Primates</taxon>
        <taxon>Haplorrhini</taxon>
        <taxon>Catarrhini</taxon>
        <taxon>Hominidae</taxon>
        <taxon>Homo</taxon>
    </lineage>
</organism>
<feature type="chain" id="PRO_0000432390" description="Meiosis-specific kinetochore protein">
    <location>
        <begin position="1"/>
        <end position="373"/>
    </location>
</feature>
<feature type="region of interest" description="Disordered" evidence="2">
    <location>
        <begin position="1"/>
        <end position="91"/>
    </location>
</feature>
<feature type="region of interest" description="Disordered" evidence="2">
    <location>
        <begin position="250"/>
        <end position="276"/>
    </location>
</feature>
<feature type="region of interest" description="Required for localization to kinetochores" evidence="1">
    <location>
        <begin position="332"/>
        <end position="335"/>
    </location>
</feature>
<feature type="short sequence motif" description="POLO box domain (PBD)-binding" evidence="1">
    <location>
        <begin position="275"/>
        <end position="277"/>
    </location>
</feature>
<feature type="compositionally biased region" description="Basic and acidic residues" evidence="2">
    <location>
        <begin position="77"/>
        <end position="91"/>
    </location>
</feature>
<name>MEIKN_HUMAN</name>
<protein>
    <recommendedName>
        <fullName evidence="3">Meiosis-specific kinetochore protein</fullName>
    </recommendedName>
</protein>
<evidence type="ECO:0000250" key="1">
    <source>
        <dbReference type="UniProtKB" id="Q5F2C3"/>
    </source>
</evidence>
<evidence type="ECO:0000256" key="2">
    <source>
        <dbReference type="SAM" id="MobiDB-lite"/>
    </source>
</evidence>
<evidence type="ECO:0000303" key="3">
    <source>
    </source>
</evidence>
<sequence>MWPLRVYTRKKREGQRLNLTPTPDLGSPAKAEAPPGSKRKGKVHGLSKIAEKAERSRQGGSGSGPFSPRLGVTGEKSLQENRSSEDTQDEKIASLRESVTDDLQVDSSSSNSELVSGLSLHHGMASSLLSYSVTDSYAEYKSFEESFPSPELFRKSDYLDWECPNLEEHMQWKNSTLLDTSKAVAIEKAPQFSNVSAIFSTSSEDYQKCHRKTVMTVADQNVSPKAKCASNSESDNAACEILLAEKTCPSTPEKTKKKKTNSSTPGKKNRGLLTSTPSSETAGFVIDLSSVQKASFEELFPNVSNYVNSNEIVPVSSLQENSSNEFPANASEICCIIRTSPGTRQVKNKGVIVKKKKYSLPKDTPQDIIIKMA</sequence>
<proteinExistence type="evidence at protein level"/>
<comment type="function">
    <text evidence="1">Key regulator of kinetochore function during meiosis I: required both for mono-orientation of kinetochores on sister chromosomes and protection of centromeric cohesin from separase-mediated cleavage. Acts by facilitating kinetochore mono-orientation during meiosis I, when kinetochores on sister chromosomes face the same direction and are thus captured and pulled by spindle fibers from the same pole. Also required to prevent cleavage of cohesin at centromeres during meiosis I, possibly by acting as a regulator of the shugoshin-dependent protection pathway. Acts in collaboration with PLK1: required for PLK1 enrichment to kinetochores. Not required during meiosis II or mitosis.</text>
</comment>
<comment type="subunit">
    <text evidence="1">Interacts with CENPC. Interacts with PLK1; required for recruitment of PLK1 at kinetochores.</text>
</comment>
<comment type="subcellular location">
    <subcellularLocation>
        <location evidence="1">Chromosome</location>
        <location evidence="1">Centromere</location>
    </subcellularLocation>
    <subcellularLocation>
        <location evidence="1">Chromosome</location>
        <location evidence="1">Centromere</location>
        <location evidence="1">Kinetochore</location>
    </subcellularLocation>
    <text evidence="1">Localizes at kinetochores in meiosis I but undetectable in meiosis II.</text>
</comment>
<accession>A0A087WXM9</accession>
<accession>A0A0A8IBZ9</accession>
<gene>
    <name evidence="3" type="primary">MEIKIN</name>
</gene>